<keyword id="KW-0963">Cytoplasm</keyword>
<keyword id="KW-0903">Direct protein sequencing</keyword>
<keyword id="KW-0312">Gluconeogenesis</keyword>
<keyword id="KW-0324">Glycolysis</keyword>
<keyword id="KW-0413">Isomerase</keyword>
<keyword id="KW-0597">Phosphoprotein</keyword>
<keyword id="KW-1185">Reference proteome</keyword>
<organism>
    <name type="scientific">Bacillus subtilis (strain 168)</name>
    <dbReference type="NCBI Taxonomy" id="224308"/>
    <lineage>
        <taxon>Bacteria</taxon>
        <taxon>Bacillati</taxon>
        <taxon>Bacillota</taxon>
        <taxon>Bacilli</taxon>
        <taxon>Bacillales</taxon>
        <taxon>Bacillaceae</taxon>
        <taxon>Bacillus</taxon>
    </lineage>
</organism>
<comment type="function">
    <text evidence="1">Involved in the gluconeogenesis. Catalyzes stereospecifically the conversion of dihydroxyacetone phosphate (DHAP) to D-glyceraldehyde-3-phosphate (G3P).</text>
</comment>
<comment type="catalytic activity">
    <reaction evidence="1">
        <text>D-glyceraldehyde 3-phosphate = dihydroxyacetone phosphate</text>
        <dbReference type="Rhea" id="RHEA:18585"/>
        <dbReference type="ChEBI" id="CHEBI:57642"/>
        <dbReference type="ChEBI" id="CHEBI:59776"/>
        <dbReference type="EC" id="5.3.1.1"/>
    </reaction>
</comment>
<comment type="pathway">
    <text evidence="1">Carbohydrate biosynthesis; gluconeogenesis.</text>
</comment>
<comment type="pathway">
    <text evidence="1">Carbohydrate degradation; glycolysis; D-glyceraldehyde 3-phosphate from glycerone phosphate: step 1/1.</text>
</comment>
<comment type="subunit">
    <text evidence="1">Homodimer.</text>
</comment>
<comment type="subcellular location">
    <subcellularLocation>
        <location evidence="1">Cytoplasm</location>
    </subcellularLocation>
</comment>
<comment type="similarity">
    <text evidence="1">Belongs to the triosephosphate isomerase family.</text>
</comment>
<reference key="1">
    <citation type="journal article" date="1994" name="J. Bacteriol.">
        <title>Cloning and nucleotide sequences of the genes encoding triose phosphate isomerase, phosphoglycerate mutase, and enolase from Bacillus subtilis.</title>
        <authorList>
            <person name="Leyva-Vazquez M.A."/>
            <person name="Setlow P."/>
        </authorList>
    </citation>
    <scope>NUCLEOTIDE SEQUENCE [GENOMIC DNA]</scope>
    <source>
        <strain>168 / Marburg / ATCC 6051 / DSM 10 / JCM 1465 / NBRC 13719 / NCIMB 3610 / NRRL NRS-744 / VKM B-501</strain>
    </source>
</reference>
<reference key="2">
    <citation type="journal article" date="1997" name="Nature">
        <title>The complete genome sequence of the Gram-positive bacterium Bacillus subtilis.</title>
        <authorList>
            <person name="Kunst F."/>
            <person name="Ogasawara N."/>
            <person name="Moszer I."/>
            <person name="Albertini A.M."/>
            <person name="Alloni G."/>
            <person name="Azevedo V."/>
            <person name="Bertero M.G."/>
            <person name="Bessieres P."/>
            <person name="Bolotin A."/>
            <person name="Borchert S."/>
            <person name="Borriss R."/>
            <person name="Boursier L."/>
            <person name="Brans A."/>
            <person name="Braun M."/>
            <person name="Brignell S.C."/>
            <person name="Bron S."/>
            <person name="Brouillet S."/>
            <person name="Bruschi C.V."/>
            <person name="Caldwell B."/>
            <person name="Capuano V."/>
            <person name="Carter N.M."/>
            <person name="Choi S.-K."/>
            <person name="Codani J.-J."/>
            <person name="Connerton I.F."/>
            <person name="Cummings N.J."/>
            <person name="Daniel R.A."/>
            <person name="Denizot F."/>
            <person name="Devine K.M."/>
            <person name="Duesterhoeft A."/>
            <person name="Ehrlich S.D."/>
            <person name="Emmerson P.T."/>
            <person name="Entian K.-D."/>
            <person name="Errington J."/>
            <person name="Fabret C."/>
            <person name="Ferrari E."/>
            <person name="Foulger D."/>
            <person name="Fritz C."/>
            <person name="Fujita M."/>
            <person name="Fujita Y."/>
            <person name="Fuma S."/>
            <person name="Galizzi A."/>
            <person name="Galleron N."/>
            <person name="Ghim S.-Y."/>
            <person name="Glaser P."/>
            <person name="Goffeau A."/>
            <person name="Golightly E.J."/>
            <person name="Grandi G."/>
            <person name="Guiseppi G."/>
            <person name="Guy B.J."/>
            <person name="Haga K."/>
            <person name="Haiech J."/>
            <person name="Harwood C.R."/>
            <person name="Henaut A."/>
            <person name="Hilbert H."/>
            <person name="Holsappel S."/>
            <person name="Hosono S."/>
            <person name="Hullo M.-F."/>
            <person name="Itaya M."/>
            <person name="Jones L.-M."/>
            <person name="Joris B."/>
            <person name="Karamata D."/>
            <person name="Kasahara Y."/>
            <person name="Klaerr-Blanchard M."/>
            <person name="Klein C."/>
            <person name="Kobayashi Y."/>
            <person name="Koetter P."/>
            <person name="Koningstein G."/>
            <person name="Krogh S."/>
            <person name="Kumano M."/>
            <person name="Kurita K."/>
            <person name="Lapidus A."/>
            <person name="Lardinois S."/>
            <person name="Lauber J."/>
            <person name="Lazarevic V."/>
            <person name="Lee S.-M."/>
            <person name="Levine A."/>
            <person name="Liu H."/>
            <person name="Masuda S."/>
            <person name="Mauel C."/>
            <person name="Medigue C."/>
            <person name="Medina N."/>
            <person name="Mellado R.P."/>
            <person name="Mizuno M."/>
            <person name="Moestl D."/>
            <person name="Nakai S."/>
            <person name="Noback M."/>
            <person name="Noone D."/>
            <person name="O'Reilly M."/>
            <person name="Ogawa K."/>
            <person name="Ogiwara A."/>
            <person name="Oudega B."/>
            <person name="Park S.-H."/>
            <person name="Parro V."/>
            <person name="Pohl T.M."/>
            <person name="Portetelle D."/>
            <person name="Porwollik S."/>
            <person name="Prescott A.M."/>
            <person name="Presecan E."/>
            <person name="Pujic P."/>
            <person name="Purnelle B."/>
            <person name="Rapoport G."/>
            <person name="Rey M."/>
            <person name="Reynolds S."/>
            <person name="Rieger M."/>
            <person name="Rivolta C."/>
            <person name="Rocha E."/>
            <person name="Roche B."/>
            <person name="Rose M."/>
            <person name="Sadaie Y."/>
            <person name="Sato T."/>
            <person name="Scanlan E."/>
            <person name="Schleich S."/>
            <person name="Schroeter R."/>
            <person name="Scoffone F."/>
            <person name="Sekiguchi J."/>
            <person name="Sekowska A."/>
            <person name="Seror S.J."/>
            <person name="Serror P."/>
            <person name="Shin B.-S."/>
            <person name="Soldo B."/>
            <person name="Sorokin A."/>
            <person name="Tacconi E."/>
            <person name="Takagi T."/>
            <person name="Takahashi H."/>
            <person name="Takemaru K."/>
            <person name="Takeuchi M."/>
            <person name="Tamakoshi A."/>
            <person name="Tanaka T."/>
            <person name="Terpstra P."/>
            <person name="Tognoni A."/>
            <person name="Tosato V."/>
            <person name="Uchiyama S."/>
            <person name="Vandenbol M."/>
            <person name="Vannier F."/>
            <person name="Vassarotti A."/>
            <person name="Viari A."/>
            <person name="Wambutt R."/>
            <person name="Wedler E."/>
            <person name="Wedler H."/>
            <person name="Weitzenegger T."/>
            <person name="Winters P."/>
            <person name="Wipat A."/>
            <person name="Yamamoto H."/>
            <person name="Yamane K."/>
            <person name="Yasumoto K."/>
            <person name="Yata K."/>
            <person name="Yoshida K."/>
            <person name="Yoshikawa H.-F."/>
            <person name="Zumstein E."/>
            <person name="Yoshikawa H."/>
            <person name="Danchin A."/>
        </authorList>
    </citation>
    <scope>NUCLEOTIDE SEQUENCE [LARGE SCALE GENOMIC DNA]</scope>
    <source>
        <strain>168</strain>
    </source>
</reference>
<reference key="3">
    <citation type="journal article" date="1992" name="Mol. Microbiol.">
        <title>Amino acid sequences of several Bacillus subtilis proteins modified by apparent guanylylation.</title>
        <authorList>
            <person name="Mitchell C."/>
            <person name="Morris P.W."/>
            <person name="Vary J.C."/>
        </authorList>
    </citation>
    <scope>PROTEIN SEQUENCE OF 1-19</scope>
    <source>
        <strain>168 / DB100</strain>
    </source>
</reference>
<reference key="4">
    <citation type="journal article" date="1996" name="J. Bacteriol.">
        <title>Cold shock stress-induced proteins in Bacillus subtilis.</title>
        <authorList>
            <person name="Graumann P."/>
            <person name="Schroeder K."/>
            <person name="Schmid R."/>
            <person name="Marahiel M.A."/>
        </authorList>
    </citation>
    <scope>PROTEIN SEQUENCE OF 1-27</scope>
    <source>
        <strain>168 / JH642</strain>
    </source>
</reference>
<reference key="5">
    <citation type="journal article" date="2007" name="Mol. Cell. Proteomics">
        <title>The serine/threonine/tyrosine phosphoproteome of the model bacterium Bacillus subtilis.</title>
        <authorList>
            <person name="Macek B."/>
            <person name="Mijakovic I."/>
            <person name="Olsen J.V."/>
            <person name="Gnad F."/>
            <person name="Kumar C."/>
            <person name="Jensen P.R."/>
            <person name="Mann M."/>
        </authorList>
    </citation>
    <scope>PHOSPHORYLATION [LARGE SCALE ANALYSIS] AT SER-213</scope>
    <scope>IDENTIFICATION BY MASS SPECTROMETRY</scope>
    <source>
        <strain>168</strain>
    </source>
</reference>
<protein>
    <recommendedName>
        <fullName evidence="1">Triosephosphate isomerase</fullName>
        <shortName evidence="1">TIM</shortName>
        <shortName evidence="1">TPI</shortName>
        <ecNumber evidence="1">5.3.1.1</ecNumber>
    </recommendedName>
    <alternativeName>
        <fullName evidence="1">Triose-phosphate isomerase</fullName>
    </alternativeName>
</protein>
<gene>
    <name evidence="1" type="primary">tpiA</name>
    <name type="synonym">tpi</name>
    <name type="ordered locus">BSU33920</name>
</gene>
<feature type="chain" id="PRO_0000090179" description="Triosephosphate isomerase">
    <location>
        <begin position="1"/>
        <end position="253"/>
    </location>
</feature>
<feature type="active site" description="Electrophile" evidence="1">
    <location>
        <position position="95"/>
    </location>
</feature>
<feature type="active site" description="Proton acceptor" evidence="1">
    <location>
        <position position="167"/>
    </location>
</feature>
<feature type="binding site" evidence="1">
    <location>
        <begin position="9"/>
        <end position="11"/>
    </location>
    <ligand>
        <name>substrate</name>
    </ligand>
</feature>
<feature type="binding site" evidence="1">
    <location>
        <position position="173"/>
    </location>
    <ligand>
        <name>substrate</name>
    </ligand>
</feature>
<feature type="binding site" evidence="1">
    <location>
        <position position="213"/>
    </location>
    <ligand>
        <name>substrate</name>
    </ligand>
</feature>
<feature type="binding site" evidence="1">
    <location>
        <begin position="234"/>
        <end position="235"/>
    </location>
    <ligand>
        <name>substrate</name>
    </ligand>
</feature>
<feature type="modified residue" description="Phosphoserine" evidence="1 2">
    <location>
        <position position="213"/>
    </location>
</feature>
<feature type="sequence conflict" description="In Ref. 1; AAA21679." evidence="3" ref="1">
    <original>CA</original>
    <variation>S</variation>
    <location>
        <begin position="41"/>
        <end position="42"/>
    </location>
</feature>
<dbReference type="EC" id="5.3.1.1" evidence="1"/>
<dbReference type="EMBL" id="L29475">
    <property type="protein sequence ID" value="AAA21679.1"/>
    <property type="molecule type" value="Genomic_DNA"/>
</dbReference>
<dbReference type="EMBL" id="AL009126">
    <property type="protein sequence ID" value="CAB15397.1"/>
    <property type="molecule type" value="Genomic_DNA"/>
</dbReference>
<dbReference type="PIR" id="A69725">
    <property type="entry name" value="A69725"/>
</dbReference>
<dbReference type="RefSeq" id="NP_391272.1">
    <property type="nucleotide sequence ID" value="NC_000964.3"/>
</dbReference>
<dbReference type="RefSeq" id="WP_003243394.1">
    <property type="nucleotide sequence ID" value="NZ_OZ025638.1"/>
</dbReference>
<dbReference type="SMR" id="P27876"/>
<dbReference type="FunCoup" id="P27876">
    <property type="interactions" value="685"/>
</dbReference>
<dbReference type="STRING" id="224308.BSU33920"/>
<dbReference type="iPTMnet" id="P27876"/>
<dbReference type="jPOST" id="P27876"/>
<dbReference type="PaxDb" id="224308-BSU33920"/>
<dbReference type="EnsemblBacteria" id="CAB15397">
    <property type="protein sequence ID" value="CAB15397"/>
    <property type="gene ID" value="BSU_33920"/>
</dbReference>
<dbReference type="GeneID" id="938626"/>
<dbReference type="KEGG" id="bsu:BSU33920"/>
<dbReference type="PATRIC" id="fig|224308.179.peg.3677"/>
<dbReference type="eggNOG" id="COG0149">
    <property type="taxonomic scope" value="Bacteria"/>
</dbReference>
<dbReference type="InParanoid" id="P27876"/>
<dbReference type="OrthoDB" id="9809429at2"/>
<dbReference type="PhylomeDB" id="P27876"/>
<dbReference type="BioCyc" id="BSUB:BSU33920-MONOMER"/>
<dbReference type="UniPathway" id="UPA00109">
    <property type="reaction ID" value="UER00189"/>
</dbReference>
<dbReference type="UniPathway" id="UPA00138"/>
<dbReference type="Proteomes" id="UP000001570">
    <property type="component" value="Chromosome"/>
</dbReference>
<dbReference type="GO" id="GO:0005829">
    <property type="term" value="C:cytosol"/>
    <property type="evidence" value="ECO:0000318"/>
    <property type="project" value="GO_Central"/>
</dbReference>
<dbReference type="GO" id="GO:0004807">
    <property type="term" value="F:triose-phosphate isomerase activity"/>
    <property type="evidence" value="ECO:0000318"/>
    <property type="project" value="GO_Central"/>
</dbReference>
<dbReference type="GO" id="GO:0006094">
    <property type="term" value="P:gluconeogenesis"/>
    <property type="evidence" value="ECO:0000318"/>
    <property type="project" value="GO_Central"/>
</dbReference>
<dbReference type="GO" id="GO:0046166">
    <property type="term" value="P:glyceraldehyde-3-phosphate biosynthetic process"/>
    <property type="evidence" value="ECO:0000318"/>
    <property type="project" value="GO_Central"/>
</dbReference>
<dbReference type="GO" id="GO:0019563">
    <property type="term" value="P:glycerol catabolic process"/>
    <property type="evidence" value="ECO:0000318"/>
    <property type="project" value="GO_Central"/>
</dbReference>
<dbReference type="GO" id="GO:0006096">
    <property type="term" value="P:glycolytic process"/>
    <property type="evidence" value="ECO:0000318"/>
    <property type="project" value="GO_Central"/>
</dbReference>
<dbReference type="CDD" id="cd00311">
    <property type="entry name" value="TIM"/>
    <property type="match status" value="1"/>
</dbReference>
<dbReference type="FunFam" id="3.20.20.70:FF:000016">
    <property type="entry name" value="Triosephosphate isomerase"/>
    <property type="match status" value="1"/>
</dbReference>
<dbReference type="Gene3D" id="3.20.20.70">
    <property type="entry name" value="Aldolase class I"/>
    <property type="match status" value="1"/>
</dbReference>
<dbReference type="HAMAP" id="MF_00147_B">
    <property type="entry name" value="TIM_B"/>
    <property type="match status" value="1"/>
</dbReference>
<dbReference type="InterPro" id="IPR013785">
    <property type="entry name" value="Aldolase_TIM"/>
</dbReference>
<dbReference type="InterPro" id="IPR035990">
    <property type="entry name" value="TIM_sf"/>
</dbReference>
<dbReference type="InterPro" id="IPR022896">
    <property type="entry name" value="TrioseP_Isoase_bac/euk"/>
</dbReference>
<dbReference type="InterPro" id="IPR000652">
    <property type="entry name" value="Triosephosphate_isomerase"/>
</dbReference>
<dbReference type="InterPro" id="IPR020861">
    <property type="entry name" value="Triosephosphate_isomerase_AS"/>
</dbReference>
<dbReference type="NCBIfam" id="TIGR00419">
    <property type="entry name" value="tim"/>
    <property type="match status" value="1"/>
</dbReference>
<dbReference type="PANTHER" id="PTHR21139">
    <property type="entry name" value="TRIOSEPHOSPHATE ISOMERASE"/>
    <property type="match status" value="1"/>
</dbReference>
<dbReference type="PANTHER" id="PTHR21139:SF42">
    <property type="entry name" value="TRIOSEPHOSPHATE ISOMERASE"/>
    <property type="match status" value="1"/>
</dbReference>
<dbReference type="Pfam" id="PF00121">
    <property type="entry name" value="TIM"/>
    <property type="match status" value="1"/>
</dbReference>
<dbReference type="SUPFAM" id="SSF51351">
    <property type="entry name" value="Triosephosphate isomerase (TIM)"/>
    <property type="match status" value="1"/>
</dbReference>
<dbReference type="PROSITE" id="PS00171">
    <property type="entry name" value="TIM_1"/>
    <property type="match status" value="1"/>
</dbReference>
<dbReference type="PROSITE" id="PS51440">
    <property type="entry name" value="TIM_2"/>
    <property type="match status" value="1"/>
</dbReference>
<sequence>MRKPIIAGNWKMNKTLGEAVSFVEEVKSSIPAADKAEAVVCAPALFLEKLASAVKGTDLKVGAQNMHFEESGAFTGEISPVALKDLGVDYCVIGHSERREMFAETDETVNKKAHAAFKHGIVPIICVGETLEEREAGKTNDLVADQVKKGLAGLSEEQVAASVIAYEPIWAIGTGKSSTAKDANDVCAHIRKTVAESFSQEAADKLRIQYGGSVKPANIKEYMAESDIDGALVGGASLEPQSFVQLLEEGQYE</sequence>
<evidence type="ECO:0000255" key="1">
    <source>
        <dbReference type="HAMAP-Rule" id="MF_00147"/>
    </source>
</evidence>
<evidence type="ECO:0000269" key="2">
    <source>
    </source>
</evidence>
<evidence type="ECO:0000305" key="3"/>
<proteinExistence type="evidence at protein level"/>
<accession>P27876</accession>
<accession>O32251</accession>
<name>TPIS_BACSU</name>